<accession>Q6HLE3</accession>
<reference key="1">
    <citation type="journal article" date="2006" name="J. Bacteriol.">
        <title>Pathogenomic sequence analysis of Bacillus cereus and Bacillus thuringiensis isolates closely related to Bacillus anthracis.</title>
        <authorList>
            <person name="Han C.S."/>
            <person name="Xie G."/>
            <person name="Challacombe J.F."/>
            <person name="Altherr M.R."/>
            <person name="Bhotika S.S."/>
            <person name="Bruce D."/>
            <person name="Campbell C.S."/>
            <person name="Campbell M.L."/>
            <person name="Chen J."/>
            <person name="Chertkov O."/>
            <person name="Cleland C."/>
            <person name="Dimitrijevic M."/>
            <person name="Doggett N.A."/>
            <person name="Fawcett J.J."/>
            <person name="Glavina T."/>
            <person name="Goodwin L.A."/>
            <person name="Hill K.K."/>
            <person name="Hitchcock P."/>
            <person name="Jackson P.J."/>
            <person name="Keim P."/>
            <person name="Kewalramani A.R."/>
            <person name="Longmire J."/>
            <person name="Lucas S."/>
            <person name="Malfatti S."/>
            <person name="McMurry K."/>
            <person name="Meincke L.J."/>
            <person name="Misra M."/>
            <person name="Moseman B.L."/>
            <person name="Mundt M."/>
            <person name="Munk A.C."/>
            <person name="Okinaka R.T."/>
            <person name="Parson-Quintana B."/>
            <person name="Reilly L.P."/>
            <person name="Richardson P."/>
            <person name="Robinson D.L."/>
            <person name="Rubin E."/>
            <person name="Saunders E."/>
            <person name="Tapia R."/>
            <person name="Tesmer J.G."/>
            <person name="Thayer N."/>
            <person name="Thompson L.S."/>
            <person name="Tice H."/>
            <person name="Ticknor L.O."/>
            <person name="Wills P.L."/>
            <person name="Brettin T.S."/>
            <person name="Gilna P."/>
        </authorList>
    </citation>
    <scope>NUCLEOTIDE SEQUENCE [LARGE SCALE GENOMIC DNA]</scope>
    <source>
        <strain>97-27</strain>
    </source>
</reference>
<sequence>MLAKRIIPCLDVKEGRVVKGVNFIGLQDVGDPVEIAALYNDAGADEIVFLDITATHEGRKTIIDVVEKTASKVFIPLTVGGGISSVKDMYNLLRAGADKVSINSAAVRNPKLIEEGAQHFGSQCIVVAIDARKVAEGKWNVYVNGGRVDTGMDAIGWAKRVVMLGAGEILLTSMDADGTKNGYDLRLTEEISKSVSIPVIASGGCGHADHIIEVFQKTTVDAALAASIFHYGEATIGDVKRKLRNANVEVRL</sequence>
<keyword id="KW-0028">Amino-acid biosynthesis</keyword>
<keyword id="KW-0963">Cytoplasm</keyword>
<keyword id="KW-0368">Histidine biosynthesis</keyword>
<keyword id="KW-0456">Lyase</keyword>
<gene>
    <name evidence="1" type="primary">hisF</name>
    <name type="ordered locus">BT9727_1294</name>
</gene>
<organism>
    <name type="scientific">Bacillus thuringiensis subsp. konkukian (strain 97-27)</name>
    <dbReference type="NCBI Taxonomy" id="281309"/>
    <lineage>
        <taxon>Bacteria</taxon>
        <taxon>Bacillati</taxon>
        <taxon>Bacillota</taxon>
        <taxon>Bacilli</taxon>
        <taxon>Bacillales</taxon>
        <taxon>Bacillaceae</taxon>
        <taxon>Bacillus</taxon>
        <taxon>Bacillus cereus group</taxon>
    </lineage>
</organism>
<feature type="chain" id="PRO_0000142119" description="Imidazole glycerol phosphate synthase subunit HisF">
    <location>
        <begin position="1"/>
        <end position="252"/>
    </location>
</feature>
<feature type="active site" evidence="1">
    <location>
        <position position="11"/>
    </location>
</feature>
<feature type="active site" evidence="1">
    <location>
        <position position="130"/>
    </location>
</feature>
<comment type="function">
    <text evidence="1">IGPS catalyzes the conversion of PRFAR and glutamine to IGP, AICAR and glutamate. The HisF subunit catalyzes the cyclization activity that produces IGP and AICAR from PRFAR using the ammonia provided by the HisH subunit.</text>
</comment>
<comment type="catalytic activity">
    <reaction evidence="1">
        <text>5-[(5-phospho-1-deoxy-D-ribulos-1-ylimino)methylamino]-1-(5-phospho-beta-D-ribosyl)imidazole-4-carboxamide + L-glutamine = D-erythro-1-(imidazol-4-yl)glycerol 3-phosphate + 5-amino-1-(5-phospho-beta-D-ribosyl)imidazole-4-carboxamide + L-glutamate + H(+)</text>
        <dbReference type="Rhea" id="RHEA:24793"/>
        <dbReference type="ChEBI" id="CHEBI:15378"/>
        <dbReference type="ChEBI" id="CHEBI:29985"/>
        <dbReference type="ChEBI" id="CHEBI:58278"/>
        <dbReference type="ChEBI" id="CHEBI:58359"/>
        <dbReference type="ChEBI" id="CHEBI:58475"/>
        <dbReference type="ChEBI" id="CHEBI:58525"/>
        <dbReference type="EC" id="4.3.2.10"/>
    </reaction>
</comment>
<comment type="pathway">
    <text evidence="1">Amino-acid biosynthesis; L-histidine biosynthesis; L-histidine from 5-phospho-alpha-D-ribose 1-diphosphate: step 5/9.</text>
</comment>
<comment type="subunit">
    <text evidence="1">Heterodimer of HisH and HisF.</text>
</comment>
<comment type="subcellular location">
    <subcellularLocation>
        <location evidence="1">Cytoplasm</location>
    </subcellularLocation>
</comment>
<comment type="similarity">
    <text evidence="1">Belongs to the HisA/HisF family.</text>
</comment>
<name>HIS6_BACHK</name>
<proteinExistence type="inferred from homology"/>
<dbReference type="EC" id="4.3.2.10" evidence="1"/>
<dbReference type="EMBL" id="AE017355">
    <property type="protein sequence ID" value="AAT59422.1"/>
    <property type="molecule type" value="Genomic_DNA"/>
</dbReference>
<dbReference type="RefSeq" id="WP_000880088.1">
    <property type="nucleotide sequence ID" value="NC_005957.1"/>
</dbReference>
<dbReference type="RefSeq" id="YP_035628.1">
    <property type="nucleotide sequence ID" value="NC_005957.1"/>
</dbReference>
<dbReference type="SMR" id="Q6HLE3"/>
<dbReference type="GeneID" id="45021409"/>
<dbReference type="KEGG" id="btk:BT9727_1294"/>
<dbReference type="PATRIC" id="fig|281309.8.peg.1363"/>
<dbReference type="HOGENOM" id="CLU_048577_4_0_9"/>
<dbReference type="UniPathway" id="UPA00031">
    <property type="reaction ID" value="UER00010"/>
</dbReference>
<dbReference type="Proteomes" id="UP000001301">
    <property type="component" value="Chromosome"/>
</dbReference>
<dbReference type="GO" id="GO:0005737">
    <property type="term" value="C:cytoplasm"/>
    <property type="evidence" value="ECO:0007669"/>
    <property type="project" value="UniProtKB-SubCell"/>
</dbReference>
<dbReference type="GO" id="GO:0000107">
    <property type="term" value="F:imidazoleglycerol-phosphate synthase activity"/>
    <property type="evidence" value="ECO:0007669"/>
    <property type="project" value="UniProtKB-UniRule"/>
</dbReference>
<dbReference type="GO" id="GO:0016829">
    <property type="term" value="F:lyase activity"/>
    <property type="evidence" value="ECO:0007669"/>
    <property type="project" value="UniProtKB-KW"/>
</dbReference>
<dbReference type="GO" id="GO:0000105">
    <property type="term" value="P:L-histidine biosynthetic process"/>
    <property type="evidence" value="ECO:0007669"/>
    <property type="project" value="UniProtKB-UniRule"/>
</dbReference>
<dbReference type="CDD" id="cd04731">
    <property type="entry name" value="HisF"/>
    <property type="match status" value="1"/>
</dbReference>
<dbReference type="FunFam" id="3.20.20.70:FF:000006">
    <property type="entry name" value="Imidazole glycerol phosphate synthase subunit HisF"/>
    <property type="match status" value="1"/>
</dbReference>
<dbReference type="Gene3D" id="3.20.20.70">
    <property type="entry name" value="Aldolase class I"/>
    <property type="match status" value="1"/>
</dbReference>
<dbReference type="HAMAP" id="MF_01013">
    <property type="entry name" value="HisF"/>
    <property type="match status" value="1"/>
</dbReference>
<dbReference type="InterPro" id="IPR013785">
    <property type="entry name" value="Aldolase_TIM"/>
</dbReference>
<dbReference type="InterPro" id="IPR006062">
    <property type="entry name" value="His_biosynth"/>
</dbReference>
<dbReference type="InterPro" id="IPR004651">
    <property type="entry name" value="HisF"/>
</dbReference>
<dbReference type="InterPro" id="IPR050064">
    <property type="entry name" value="IGPS_HisA/HisF"/>
</dbReference>
<dbReference type="InterPro" id="IPR011060">
    <property type="entry name" value="RibuloseP-bd_barrel"/>
</dbReference>
<dbReference type="NCBIfam" id="TIGR00735">
    <property type="entry name" value="hisF"/>
    <property type="match status" value="1"/>
</dbReference>
<dbReference type="PANTHER" id="PTHR21235:SF2">
    <property type="entry name" value="IMIDAZOLE GLYCEROL PHOSPHATE SYNTHASE HISHF"/>
    <property type="match status" value="1"/>
</dbReference>
<dbReference type="PANTHER" id="PTHR21235">
    <property type="entry name" value="IMIDAZOLE GLYCEROL PHOSPHATE SYNTHASE SUBUNIT HISF/H IGP SYNTHASE SUBUNIT HISF/H"/>
    <property type="match status" value="1"/>
</dbReference>
<dbReference type="Pfam" id="PF00977">
    <property type="entry name" value="His_biosynth"/>
    <property type="match status" value="1"/>
</dbReference>
<dbReference type="SUPFAM" id="SSF51366">
    <property type="entry name" value="Ribulose-phoshate binding barrel"/>
    <property type="match status" value="1"/>
</dbReference>
<protein>
    <recommendedName>
        <fullName evidence="1">Imidazole glycerol phosphate synthase subunit HisF</fullName>
        <ecNumber evidence="1">4.3.2.10</ecNumber>
    </recommendedName>
    <alternativeName>
        <fullName evidence="1">IGP synthase cyclase subunit</fullName>
    </alternativeName>
    <alternativeName>
        <fullName evidence="1">IGP synthase subunit HisF</fullName>
    </alternativeName>
    <alternativeName>
        <fullName evidence="1">ImGP synthase subunit HisF</fullName>
        <shortName evidence="1">IGPS subunit HisF</shortName>
    </alternativeName>
</protein>
<evidence type="ECO:0000255" key="1">
    <source>
        <dbReference type="HAMAP-Rule" id="MF_01013"/>
    </source>
</evidence>